<evidence type="ECO:0000250" key="1"/>
<evidence type="ECO:0000255" key="2">
    <source>
        <dbReference type="PROSITE-ProRule" id="PRU00159"/>
    </source>
</evidence>
<evidence type="ECO:0000255" key="3">
    <source>
        <dbReference type="PROSITE-ProRule" id="PRU10027"/>
    </source>
</evidence>
<evidence type="ECO:0000256" key="4">
    <source>
        <dbReference type="SAM" id="MobiDB-lite"/>
    </source>
</evidence>
<evidence type="ECO:0000269" key="5">
    <source>
    </source>
</evidence>
<evidence type="ECO:0000269" key="6">
    <source>
    </source>
</evidence>
<evidence type="ECO:0000269" key="7">
    <source>
    </source>
</evidence>
<evidence type="ECO:0000269" key="8">
    <source>
    </source>
</evidence>
<evidence type="ECO:0000269" key="9">
    <source>
    </source>
</evidence>
<evidence type="ECO:0000305" key="10"/>
<evidence type="ECO:0007744" key="11">
    <source>
    </source>
</evidence>
<evidence type="ECO:0007744" key="12">
    <source>
    </source>
</evidence>
<evidence type="ECO:0007744" key="13">
    <source>
    </source>
</evidence>
<evidence type="ECO:0007744" key="14">
    <source>
    </source>
</evidence>
<evidence type="ECO:0007744" key="15">
    <source>
    </source>
</evidence>
<evidence type="ECO:0007829" key="16">
    <source>
        <dbReference type="PDB" id="6FYV"/>
    </source>
</evidence>
<protein>
    <recommendedName>
        <fullName>Dual specificity protein kinase CLK4</fullName>
        <ecNumber>2.7.12.1</ecNumber>
    </recommendedName>
    <alternativeName>
        <fullName>CDC-like kinase 4</fullName>
    </alternativeName>
</protein>
<name>CLK4_HUMAN</name>
<accession>Q9HAZ1</accession>
<keyword id="KW-0002">3D-structure</keyword>
<keyword id="KW-0067">ATP-binding</keyword>
<keyword id="KW-0418">Kinase</keyword>
<keyword id="KW-0547">Nucleotide-binding</keyword>
<keyword id="KW-0539">Nucleus</keyword>
<keyword id="KW-0597">Phosphoprotein</keyword>
<keyword id="KW-1267">Proteomics identification</keyword>
<keyword id="KW-1185">Reference proteome</keyword>
<keyword id="KW-0723">Serine/threonine-protein kinase</keyword>
<keyword id="KW-0808">Transferase</keyword>
<keyword id="KW-0829">Tyrosine-protein kinase</keyword>
<gene>
    <name type="primary">CLK4</name>
</gene>
<organism>
    <name type="scientific">Homo sapiens</name>
    <name type="common">Human</name>
    <dbReference type="NCBI Taxonomy" id="9606"/>
    <lineage>
        <taxon>Eukaryota</taxon>
        <taxon>Metazoa</taxon>
        <taxon>Chordata</taxon>
        <taxon>Craniata</taxon>
        <taxon>Vertebrata</taxon>
        <taxon>Euteleostomi</taxon>
        <taxon>Mammalia</taxon>
        <taxon>Eutheria</taxon>
        <taxon>Euarchontoglires</taxon>
        <taxon>Primates</taxon>
        <taxon>Haplorrhini</taxon>
        <taxon>Catarrhini</taxon>
        <taxon>Hominidae</taxon>
        <taxon>Homo</taxon>
    </lineage>
</organism>
<reference key="1">
    <citation type="journal article" date="2001" name="Genomics">
        <title>Molecular characterization of a cDNA encoding functional human CLK4 kinase and localization to chromosome 5q35.</title>
        <authorList>
            <person name="Schultz J."/>
            <person name="Jones T."/>
            <person name="Bork P."/>
            <person name="Sheer D."/>
            <person name="Blencke S."/>
            <person name="Steyrer S."/>
            <person name="Wellbrock U."/>
            <person name="Bevec D."/>
            <person name="Ullrich A."/>
            <person name="Wallasch C."/>
        </authorList>
    </citation>
    <scope>NUCLEOTIDE SEQUENCE [MRNA]</scope>
    <scope>FUNCTION</scope>
    <scope>TISSUE SPECIFICITY</scope>
    <scope>AUTOPHOSPHORYLATION</scope>
    <scope>MUTAGENESIS OF LYS-189</scope>
    <source>
        <tissue>Kidney</tissue>
    </source>
</reference>
<reference key="2">
    <citation type="journal article" date="2001" name="Genomics">
        <authorList>
            <person name="Schultz J."/>
            <person name="Jones T."/>
            <person name="Bork P."/>
            <person name="Sheer D."/>
            <person name="Blencke S."/>
            <person name="Steyrer S."/>
            <person name="Wellbrock U."/>
            <person name="Bevec D."/>
            <person name="Ullrich A."/>
            <person name="Wallasch C."/>
        </authorList>
    </citation>
    <scope>ERRATUM OF PUBMED:11170754</scope>
</reference>
<reference key="3">
    <citation type="journal article" date="2003" name="Protein Sci.">
        <title>Structural analysis of UBL5, a novel ubiquitin-like modifier.</title>
        <authorList>
            <person name="McNally T."/>
            <person name="Huang Q."/>
            <person name="Janis R.S."/>
            <person name="Liu Z."/>
            <person name="Olejniczak E.T."/>
            <person name="Reilly R.M."/>
        </authorList>
    </citation>
    <scope>INTERACTION WITH UBL5</scope>
</reference>
<reference key="4">
    <citation type="journal article" date="2003" name="Biochem. Biophys. Res. Commun.">
        <title>Beacon interacts with cdc2/cdc28-like kinases.</title>
        <authorList>
            <person name="Kantham L."/>
            <person name="Kerr-Bayles L."/>
            <person name="Godde N."/>
            <person name="Quick M."/>
            <person name="Webb R."/>
            <person name="Sunderland T."/>
            <person name="Bond J."/>
            <person name="Walder K."/>
            <person name="Augert G."/>
            <person name="Collier G."/>
        </authorList>
    </citation>
    <scope>INTERACTION WITH UBL5</scope>
</reference>
<reference key="5">
    <citation type="journal article" date="2006" name="Cell">
        <title>Global, in vivo, and site-specific phosphorylation dynamics in signaling networks.</title>
        <authorList>
            <person name="Olsen J.V."/>
            <person name="Blagoev B."/>
            <person name="Gnad F."/>
            <person name="Macek B."/>
            <person name="Kumar C."/>
            <person name="Mortensen P."/>
            <person name="Mann M."/>
        </authorList>
    </citation>
    <scope>PHOSPHORYLATION [LARGE SCALE ANALYSIS] AT SER-138</scope>
    <scope>IDENTIFICATION BY MASS SPECTROMETRY [LARGE SCALE ANALYSIS]</scope>
    <source>
        <tissue>Cervix carcinoma</tissue>
    </source>
</reference>
<reference key="6">
    <citation type="journal article" date="2008" name="Mol. Cell">
        <title>Kinase-selective enrichment enables quantitative phosphoproteomics of the kinome across the cell cycle.</title>
        <authorList>
            <person name="Daub H."/>
            <person name="Olsen J.V."/>
            <person name="Bairlein M."/>
            <person name="Gnad F."/>
            <person name="Oppermann F.S."/>
            <person name="Korner R."/>
            <person name="Greff Z."/>
            <person name="Keri G."/>
            <person name="Stemmann O."/>
            <person name="Mann M."/>
        </authorList>
    </citation>
    <scope>PHOSPHORYLATION [LARGE SCALE ANALYSIS] AT SER-138</scope>
    <scope>IDENTIFICATION BY MASS SPECTROMETRY [LARGE SCALE ANALYSIS]</scope>
    <source>
        <tissue>Cervix carcinoma</tissue>
    </source>
</reference>
<reference key="7">
    <citation type="journal article" date="2008" name="Proc. Natl. Acad. Sci. U.S.A.">
        <title>A quantitative atlas of mitotic phosphorylation.</title>
        <authorList>
            <person name="Dephoure N."/>
            <person name="Zhou C."/>
            <person name="Villen J."/>
            <person name="Beausoleil S.A."/>
            <person name="Bakalarski C.E."/>
            <person name="Elledge S.J."/>
            <person name="Gygi S.P."/>
        </authorList>
    </citation>
    <scope>PHOSPHORYLATION [LARGE SCALE ANALYSIS] AT SER-136 AND SER-138</scope>
    <scope>IDENTIFICATION BY MASS SPECTROMETRY [LARGE SCALE ANALYSIS]</scope>
    <source>
        <tissue>Cervix carcinoma</tissue>
    </source>
</reference>
<reference key="8">
    <citation type="journal article" date="2009" name="Circ. Res.">
        <title>Cdc2-like kinases and DNA topoisomerase I regulate alternative splicing of tissue factor in human endothelial cells.</title>
        <authorList>
            <person name="Eisenreich A."/>
            <person name="Bogdanov V.Y."/>
            <person name="Zakrzewicz A."/>
            <person name="Pries A."/>
            <person name="Antoniak S."/>
            <person name="Poller W."/>
            <person name="Schultheiss H.P."/>
            <person name="Rauch U."/>
        </authorList>
    </citation>
    <scope>FUNCTION</scope>
    <scope>ALTERNATIVE SPLICING</scope>
    <scope>TISSUE SPECIFICITY</scope>
</reference>
<reference key="9">
    <citation type="journal article" date="2009" name="Mol. Cell. Proteomics">
        <title>Large-scale proteomics analysis of the human kinome.</title>
        <authorList>
            <person name="Oppermann F.S."/>
            <person name="Gnad F."/>
            <person name="Olsen J.V."/>
            <person name="Hornberger R."/>
            <person name="Greff Z."/>
            <person name="Keri G."/>
            <person name="Mann M."/>
            <person name="Daub H."/>
        </authorList>
    </citation>
    <scope>PHOSPHORYLATION [LARGE SCALE ANALYSIS] AT SER-138</scope>
    <scope>IDENTIFICATION BY MASS SPECTROMETRY [LARGE SCALE ANALYSIS]</scope>
</reference>
<reference key="10">
    <citation type="journal article" date="2013" name="J. Proteome Res.">
        <title>Toward a comprehensive characterization of a human cancer cell phosphoproteome.</title>
        <authorList>
            <person name="Zhou H."/>
            <person name="Di Palma S."/>
            <person name="Preisinger C."/>
            <person name="Peng M."/>
            <person name="Polat A.N."/>
            <person name="Heck A.J."/>
            <person name="Mohammed S."/>
        </authorList>
    </citation>
    <scope>PHOSPHORYLATION [LARGE SCALE ANALYSIS] AT SER-138</scope>
    <scope>IDENTIFICATION BY MASS SPECTROMETRY [LARGE SCALE ANALYSIS]</scope>
    <source>
        <tissue>Erythroleukemia</tissue>
    </source>
</reference>
<reference key="11">
    <citation type="journal article" date="2007" name="Nature">
        <title>Patterns of somatic mutation in human cancer genomes.</title>
        <authorList>
            <person name="Greenman C."/>
            <person name="Stephens P."/>
            <person name="Smith R."/>
            <person name="Dalgliesh G.L."/>
            <person name="Hunter C."/>
            <person name="Bignell G."/>
            <person name="Davies H."/>
            <person name="Teague J."/>
            <person name="Butler A."/>
            <person name="Stevens C."/>
            <person name="Edkins S."/>
            <person name="O'Meara S."/>
            <person name="Vastrik I."/>
            <person name="Schmidt E.E."/>
            <person name="Avis T."/>
            <person name="Barthorpe S."/>
            <person name="Bhamra G."/>
            <person name="Buck G."/>
            <person name="Choudhury B."/>
            <person name="Clements J."/>
            <person name="Cole J."/>
            <person name="Dicks E."/>
            <person name="Forbes S."/>
            <person name="Gray K."/>
            <person name="Halliday K."/>
            <person name="Harrison R."/>
            <person name="Hills K."/>
            <person name="Hinton J."/>
            <person name="Jenkinson A."/>
            <person name="Jones D."/>
            <person name="Menzies A."/>
            <person name="Mironenko T."/>
            <person name="Perry J."/>
            <person name="Raine K."/>
            <person name="Richardson D."/>
            <person name="Shepherd R."/>
            <person name="Small A."/>
            <person name="Tofts C."/>
            <person name="Varian J."/>
            <person name="Webb T."/>
            <person name="West S."/>
            <person name="Widaa S."/>
            <person name="Yates A."/>
            <person name="Cahill D.P."/>
            <person name="Louis D.N."/>
            <person name="Goldstraw P."/>
            <person name="Nicholson A.G."/>
            <person name="Brasseur F."/>
            <person name="Looijenga L."/>
            <person name="Weber B.L."/>
            <person name="Chiew Y.-E."/>
            <person name="DeFazio A."/>
            <person name="Greaves M.F."/>
            <person name="Green A.R."/>
            <person name="Campbell P."/>
            <person name="Birney E."/>
            <person name="Easton D.F."/>
            <person name="Chenevix-Trench G."/>
            <person name="Tan M.-H."/>
            <person name="Khoo S.K."/>
            <person name="Teh B.T."/>
            <person name="Yuen S.T."/>
            <person name="Leung S.Y."/>
            <person name="Wooster R."/>
            <person name="Futreal P.A."/>
            <person name="Stratton M.R."/>
        </authorList>
    </citation>
    <scope>VARIANTS [LARGE SCALE ANALYSIS] PHE-352 AND VAL-363</scope>
</reference>
<proteinExistence type="evidence at protein level"/>
<feature type="chain" id="PRO_0000085873" description="Dual specificity protein kinase CLK4">
    <location>
        <begin position="1"/>
        <end position="481"/>
    </location>
</feature>
<feature type="domain" description="Protein kinase" evidence="2">
    <location>
        <begin position="159"/>
        <end position="475"/>
    </location>
</feature>
<feature type="region of interest" description="Disordered" evidence="4">
    <location>
        <begin position="1"/>
        <end position="46"/>
    </location>
</feature>
<feature type="region of interest" description="Disordered" evidence="4">
    <location>
        <begin position="102"/>
        <end position="143"/>
    </location>
</feature>
<feature type="compositionally biased region" description="Basic and acidic residues" evidence="4">
    <location>
        <begin position="8"/>
        <end position="24"/>
    </location>
</feature>
<feature type="compositionally biased region" description="Basic residues" evidence="4">
    <location>
        <begin position="25"/>
        <end position="34"/>
    </location>
</feature>
<feature type="compositionally biased region" description="Basic residues" evidence="4">
    <location>
        <begin position="106"/>
        <end position="136"/>
    </location>
</feature>
<feature type="active site" description="Proton acceptor" evidence="2 3">
    <location>
        <position position="286"/>
    </location>
</feature>
<feature type="binding site" evidence="2">
    <location>
        <begin position="165"/>
        <end position="173"/>
    </location>
    <ligand>
        <name>ATP</name>
        <dbReference type="ChEBI" id="CHEBI:30616"/>
    </ligand>
</feature>
<feature type="binding site" evidence="2">
    <location>
        <position position="189"/>
    </location>
    <ligand>
        <name>ATP</name>
        <dbReference type="ChEBI" id="CHEBI:30616"/>
    </ligand>
</feature>
<feature type="modified residue" description="Phosphoserine" evidence="12">
    <location>
        <position position="136"/>
    </location>
</feature>
<feature type="modified residue" description="Phosphoserine" evidence="11 12 13 14 15">
    <location>
        <position position="138"/>
    </location>
</feature>
<feature type="sequence variant" id="VAR_040414" description="In dbSNP:rs35272416." evidence="8">
    <original>L</original>
    <variation>F</variation>
    <location>
        <position position="352"/>
    </location>
</feature>
<feature type="sequence variant" id="VAR_040415" description="In dbSNP:rs55746655." evidence="8">
    <original>I</original>
    <variation>V</variation>
    <location>
        <position position="363"/>
    </location>
</feature>
<feature type="mutagenesis site" description="Loss of function." evidence="5">
    <original>K</original>
    <variation>R</variation>
    <location>
        <position position="189"/>
    </location>
</feature>
<feature type="turn" evidence="16">
    <location>
        <begin position="156"/>
        <end position="158"/>
    </location>
</feature>
<feature type="strand" evidence="16">
    <location>
        <begin position="159"/>
        <end position="167"/>
    </location>
</feature>
<feature type="strand" evidence="16">
    <location>
        <begin position="169"/>
        <end position="178"/>
    </location>
</feature>
<feature type="helix" evidence="16">
    <location>
        <begin position="179"/>
        <end position="181"/>
    </location>
</feature>
<feature type="strand" evidence="16">
    <location>
        <begin position="185"/>
        <end position="191"/>
    </location>
</feature>
<feature type="helix" evidence="16">
    <location>
        <begin position="195"/>
        <end position="214"/>
    </location>
</feature>
<feature type="strand" evidence="16">
    <location>
        <begin position="225"/>
        <end position="231"/>
    </location>
</feature>
<feature type="strand" evidence="16">
    <location>
        <begin position="234"/>
        <end position="239"/>
    </location>
</feature>
<feature type="helix" evidence="16">
    <location>
        <begin position="246"/>
        <end position="252"/>
    </location>
</feature>
<feature type="turn" evidence="16">
    <location>
        <begin position="253"/>
        <end position="255"/>
    </location>
</feature>
<feature type="helix" evidence="16">
    <location>
        <begin position="260"/>
        <end position="278"/>
    </location>
</feature>
<feature type="turn" evidence="16">
    <location>
        <begin position="279"/>
        <end position="281"/>
    </location>
</feature>
<feature type="helix" evidence="16">
    <location>
        <begin position="289"/>
        <end position="291"/>
    </location>
</feature>
<feature type="strand" evidence="16">
    <location>
        <begin position="292"/>
        <end position="295"/>
    </location>
</feature>
<feature type="strand" evidence="16">
    <location>
        <begin position="299"/>
        <end position="303"/>
    </location>
</feature>
<feature type="strand" evidence="16">
    <location>
        <begin position="310"/>
        <end position="315"/>
    </location>
</feature>
<feature type="strand" evidence="16">
    <location>
        <begin position="319"/>
        <end position="321"/>
    </location>
</feature>
<feature type="helix" evidence="16">
    <location>
        <begin position="341"/>
        <end position="343"/>
    </location>
</feature>
<feature type="helix" evidence="16">
    <location>
        <begin position="346"/>
        <end position="349"/>
    </location>
</feature>
<feature type="helix" evidence="16">
    <location>
        <begin position="357"/>
        <end position="372"/>
    </location>
</feature>
<feature type="helix" evidence="16">
    <location>
        <begin position="382"/>
        <end position="393"/>
    </location>
</feature>
<feature type="helix" evidence="16">
    <location>
        <begin position="398"/>
        <end position="403"/>
    </location>
</feature>
<feature type="helix" evidence="16">
    <location>
        <begin position="407"/>
        <end position="409"/>
    </location>
</feature>
<feature type="strand" evidence="16">
    <location>
        <begin position="410"/>
        <end position="415"/>
    </location>
</feature>
<feature type="helix" evidence="16">
    <location>
        <begin position="422"/>
        <end position="430"/>
    </location>
</feature>
<feature type="helix" evidence="16">
    <location>
        <begin position="434"/>
        <end position="437"/>
    </location>
</feature>
<feature type="helix" evidence="16">
    <location>
        <begin position="443"/>
        <end position="455"/>
    </location>
</feature>
<feature type="turn" evidence="16">
    <location>
        <begin position="460"/>
        <end position="462"/>
    </location>
</feature>
<feature type="helix" evidence="16">
    <location>
        <begin position="466"/>
        <end position="470"/>
    </location>
</feature>
<feature type="helix" evidence="16">
    <location>
        <begin position="473"/>
        <end position="478"/>
    </location>
</feature>
<dbReference type="EC" id="2.7.12.1"/>
<dbReference type="EMBL" id="AF294429">
    <property type="protein sequence ID" value="AAG10074.1"/>
    <property type="molecule type" value="mRNA"/>
</dbReference>
<dbReference type="CCDS" id="CCDS4437.1"/>
<dbReference type="RefSeq" id="NP_065717.1">
    <property type="nucleotide sequence ID" value="NM_020666.3"/>
</dbReference>
<dbReference type="PDB" id="6FYV">
    <property type="method" value="X-ray"/>
    <property type="resolution" value="2.46 A"/>
    <property type="chains" value="A=146-480"/>
</dbReference>
<dbReference type="PDBsum" id="6FYV"/>
<dbReference type="SMR" id="Q9HAZ1"/>
<dbReference type="BioGRID" id="121501">
    <property type="interactions" value="43"/>
</dbReference>
<dbReference type="FunCoup" id="Q9HAZ1">
    <property type="interactions" value="2120"/>
</dbReference>
<dbReference type="IntAct" id="Q9HAZ1">
    <property type="interactions" value="33"/>
</dbReference>
<dbReference type="STRING" id="9606.ENSP00000316948"/>
<dbReference type="BindingDB" id="Q9HAZ1"/>
<dbReference type="ChEMBL" id="CHEMBL4203"/>
<dbReference type="DrugBank" id="DB12010">
    <property type="generic name" value="Fostamatinib"/>
</dbReference>
<dbReference type="DrugCentral" id="Q9HAZ1"/>
<dbReference type="GuidetoPHARMACOLOGY" id="1993"/>
<dbReference type="iPTMnet" id="Q9HAZ1"/>
<dbReference type="PhosphoSitePlus" id="Q9HAZ1"/>
<dbReference type="BioMuta" id="CLK4"/>
<dbReference type="DMDM" id="34922132"/>
<dbReference type="CPTAC" id="non-CPTAC-2952"/>
<dbReference type="CPTAC" id="non-CPTAC-2953"/>
<dbReference type="CPTAC" id="non-CPTAC-5638"/>
<dbReference type="CPTAC" id="non-CPTAC-5639"/>
<dbReference type="jPOST" id="Q9HAZ1"/>
<dbReference type="MassIVE" id="Q9HAZ1"/>
<dbReference type="PaxDb" id="9606-ENSP00000316948"/>
<dbReference type="PeptideAtlas" id="Q9HAZ1"/>
<dbReference type="ProteomicsDB" id="81459"/>
<dbReference type="Pumba" id="Q9HAZ1"/>
<dbReference type="Antibodypedia" id="29447">
    <property type="antibodies" value="113 antibodies from 25 providers"/>
</dbReference>
<dbReference type="DNASU" id="57396"/>
<dbReference type="Ensembl" id="ENST00000316308.9">
    <property type="protein sequence ID" value="ENSP00000316948.4"/>
    <property type="gene ID" value="ENSG00000113240.14"/>
</dbReference>
<dbReference type="GeneID" id="57396"/>
<dbReference type="KEGG" id="hsa:57396"/>
<dbReference type="MANE-Select" id="ENST00000316308.9">
    <property type="protein sequence ID" value="ENSP00000316948.4"/>
    <property type="RefSeq nucleotide sequence ID" value="NM_020666.3"/>
    <property type="RefSeq protein sequence ID" value="NP_065717.1"/>
</dbReference>
<dbReference type="UCSC" id="uc003mjf.2">
    <property type="organism name" value="human"/>
</dbReference>
<dbReference type="AGR" id="HGNC:13659"/>
<dbReference type="CTD" id="57396"/>
<dbReference type="DisGeNET" id="57396"/>
<dbReference type="GeneCards" id="CLK4"/>
<dbReference type="HGNC" id="HGNC:13659">
    <property type="gene designation" value="CLK4"/>
</dbReference>
<dbReference type="HPA" id="ENSG00000113240">
    <property type="expression patterns" value="Low tissue specificity"/>
</dbReference>
<dbReference type="MIM" id="607969">
    <property type="type" value="gene"/>
</dbReference>
<dbReference type="neXtProt" id="NX_Q9HAZ1"/>
<dbReference type="OpenTargets" id="ENSG00000113240"/>
<dbReference type="PharmGKB" id="PA26598"/>
<dbReference type="VEuPathDB" id="HostDB:ENSG00000113240"/>
<dbReference type="eggNOG" id="KOG0671">
    <property type="taxonomic scope" value="Eukaryota"/>
</dbReference>
<dbReference type="GeneTree" id="ENSGT00940000160245"/>
<dbReference type="HOGENOM" id="CLU_000288_5_16_1"/>
<dbReference type="InParanoid" id="Q9HAZ1"/>
<dbReference type="OMA" id="NFRCVQM"/>
<dbReference type="OrthoDB" id="283111at2759"/>
<dbReference type="PAN-GO" id="Q9HAZ1">
    <property type="GO annotations" value="5 GO annotations based on evolutionary models"/>
</dbReference>
<dbReference type="PhylomeDB" id="Q9HAZ1"/>
<dbReference type="TreeFam" id="TF101041"/>
<dbReference type="PathwayCommons" id="Q9HAZ1"/>
<dbReference type="SignaLink" id="Q9HAZ1"/>
<dbReference type="SIGNOR" id="Q9HAZ1"/>
<dbReference type="BioGRID-ORCS" id="57396">
    <property type="hits" value="12 hits in 1190 CRISPR screens"/>
</dbReference>
<dbReference type="ChiTaRS" id="CLK4">
    <property type="organism name" value="human"/>
</dbReference>
<dbReference type="GenomeRNAi" id="57396"/>
<dbReference type="Pharos" id="Q9HAZ1">
    <property type="development level" value="Tchem"/>
</dbReference>
<dbReference type="PRO" id="PR:Q9HAZ1"/>
<dbReference type="Proteomes" id="UP000005640">
    <property type="component" value="Chromosome 5"/>
</dbReference>
<dbReference type="RNAct" id="Q9HAZ1">
    <property type="molecule type" value="protein"/>
</dbReference>
<dbReference type="Bgee" id="ENSG00000113240">
    <property type="expression patterns" value="Expressed in cerebellar hemisphere and 199 other cell types or tissues"/>
</dbReference>
<dbReference type="ExpressionAtlas" id="Q9HAZ1">
    <property type="expression patterns" value="baseline and differential"/>
</dbReference>
<dbReference type="GO" id="GO:0005634">
    <property type="term" value="C:nucleus"/>
    <property type="evidence" value="ECO:0000318"/>
    <property type="project" value="GO_Central"/>
</dbReference>
<dbReference type="GO" id="GO:0005524">
    <property type="term" value="F:ATP binding"/>
    <property type="evidence" value="ECO:0007669"/>
    <property type="project" value="UniProtKB-KW"/>
</dbReference>
<dbReference type="GO" id="GO:0106310">
    <property type="term" value="F:protein serine kinase activity"/>
    <property type="evidence" value="ECO:0007669"/>
    <property type="project" value="RHEA"/>
</dbReference>
<dbReference type="GO" id="GO:0004674">
    <property type="term" value="F:protein serine/threonine kinase activity"/>
    <property type="evidence" value="ECO:0000250"/>
    <property type="project" value="UniProtKB"/>
</dbReference>
<dbReference type="GO" id="GO:0004712">
    <property type="term" value="F:protein serine/threonine/tyrosine kinase activity"/>
    <property type="evidence" value="ECO:0007669"/>
    <property type="project" value="UniProtKB-EC"/>
</dbReference>
<dbReference type="GO" id="GO:0004713">
    <property type="term" value="F:protein tyrosine kinase activity"/>
    <property type="evidence" value="ECO:0000318"/>
    <property type="project" value="GO_Central"/>
</dbReference>
<dbReference type="GO" id="GO:0043484">
    <property type="term" value="P:regulation of RNA splicing"/>
    <property type="evidence" value="ECO:0000315"/>
    <property type="project" value="UniProtKB"/>
</dbReference>
<dbReference type="CDD" id="cd14213">
    <property type="entry name" value="PKc_CLK1_4"/>
    <property type="match status" value="1"/>
</dbReference>
<dbReference type="FunFam" id="3.30.200.20:FF:000061">
    <property type="entry name" value="Dual specificity protein kinase CLK2"/>
    <property type="match status" value="1"/>
</dbReference>
<dbReference type="FunFam" id="1.10.510.10:FF:000220">
    <property type="entry name" value="dual specificity protein kinase CLK4 isoform X1"/>
    <property type="match status" value="1"/>
</dbReference>
<dbReference type="Gene3D" id="3.30.200.20">
    <property type="entry name" value="Phosphorylase Kinase, domain 1"/>
    <property type="match status" value="1"/>
</dbReference>
<dbReference type="Gene3D" id="1.10.510.10">
    <property type="entry name" value="Transferase(Phosphotransferase) domain 1"/>
    <property type="match status" value="1"/>
</dbReference>
<dbReference type="InterPro" id="IPR051175">
    <property type="entry name" value="CLK_kinases"/>
</dbReference>
<dbReference type="InterPro" id="IPR011009">
    <property type="entry name" value="Kinase-like_dom_sf"/>
</dbReference>
<dbReference type="InterPro" id="IPR000719">
    <property type="entry name" value="Prot_kinase_dom"/>
</dbReference>
<dbReference type="InterPro" id="IPR017441">
    <property type="entry name" value="Protein_kinase_ATP_BS"/>
</dbReference>
<dbReference type="InterPro" id="IPR008271">
    <property type="entry name" value="Ser/Thr_kinase_AS"/>
</dbReference>
<dbReference type="PANTHER" id="PTHR45646:SF1">
    <property type="entry name" value="DUAL SPECIFICITY PROTEIN KINASE CLK4"/>
    <property type="match status" value="1"/>
</dbReference>
<dbReference type="PANTHER" id="PTHR45646">
    <property type="entry name" value="SERINE/THREONINE-PROTEIN KINASE DOA-RELATED"/>
    <property type="match status" value="1"/>
</dbReference>
<dbReference type="Pfam" id="PF00069">
    <property type="entry name" value="Pkinase"/>
    <property type="match status" value="1"/>
</dbReference>
<dbReference type="SMART" id="SM00220">
    <property type="entry name" value="S_TKc"/>
    <property type="match status" value="1"/>
</dbReference>
<dbReference type="SUPFAM" id="SSF56112">
    <property type="entry name" value="Protein kinase-like (PK-like)"/>
    <property type="match status" value="1"/>
</dbReference>
<dbReference type="PROSITE" id="PS00107">
    <property type="entry name" value="PROTEIN_KINASE_ATP"/>
    <property type="match status" value="1"/>
</dbReference>
<dbReference type="PROSITE" id="PS50011">
    <property type="entry name" value="PROTEIN_KINASE_DOM"/>
    <property type="match status" value="1"/>
</dbReference>
<dbReference type="PROSITE" id="PS00108">
    <property type="entry name" value="PROTEIN_KINASE_ST"/>
    <property type="match status" value="1"/>
</dbReference>
<comment type="function">
    <text evidence="5 9">Dual specificity kinase acting on both serine/threonine and tyrosine-containing substrates. Phosphorylates serine- and arginine-rich (SR) proteins of the spliceosomal complex and may be a constituent of a network of regulatory mechanisms that enable SR proteins to control RNA splicing. Phosphorylates SRSF1 and SRSF3. Required for the regulation of alternative splicing of MAPT/TAU. Regulates the alternative splicing of tissue factor (F3) pre-mRNA in endothelial cells.</text>
</comment>
<comment type="catalytic activity">
    <reaction>
        <text>L-seryl-[protein] + ATP = O-phospho-L-seryl-[protein] + ADP + H(+)</text>
        <dbReference type="Rhea" id="RHEA:17989"/>
        <dbReference type="Rhea" id="RHEA-COMP:9863"/>
        <dbReference type="Rhea" id="RHEA-COMP:11604"/>
        <dbReference type="ChEBI" id="CHEBI:15378"/>
        <dbReference type="ChEBI" id="CHEBI:29999"/>
        <dbReference type="ChEBI" id="CHEBI:30616"/>
        <dbReference type="ChEBI" id="CHEBI:83421"/>
        <dbReference type="ChEBI" id="CHEBI:456216"/>
        <dbReference type="EC" id="2.7.12.1"/>
    </reaction>
</comment>
<comment type="catalytic activity">
    <reaction>
        <text>L-threonyl-[protein] + ATP = O-phospho-L-threonyl-[protein] + ADP + H(+)</text>
        <dbReference type="Rhea" id="RHEA:46608"/>
        <dbReference type="Rhea" id="RHEA-COMP:11060"/>
        <dbReference type="Rhea" id="RHEA-COMP:11605"/>
        <dbReference type="ChEBI" id="CHEBI:15378"/>
        <dbReference type="ChEBI" id="CHEBI:30013"/>
        <dbReference type="ChEBI" id="CHEBI:30616"/>
        <dbReference type="ChEBI" id="CHEBI:61977"/>
        <dbReference type="ChEBI" id="CHEBI:456216"/>
        <dbReference type="EC" id="2.7.12.1"/>
    </reaction>
</comment>
<comment type="catalytic activity">
    <reaction>
        <text>L-tyrosyl-[protein] + ATP = O-phospho-L-tyrosyl-[protein] + ADP + H(+)</text>
        <dbReference type="Rhea" id="RHEA:10596"/>
        <dbReference type="Rhea" id="RHEA-COMP:10136"/>
        <dbReference type="Rhea" id="RHEA-COMP:20101"/>
        <dbReference type="ChEBI" id="CHEBI:15378"/>
        <dbReference type="ChEBI" id="CHEBI:30616"/>
        <dbReference type="ChEBI" id="CHEBI:46858"/>
        <dbReference type="ChEBI" id="CHEBI:61978"/>
        <dbReference type="ChEBI" id="CHEBI:456216"/>
        <dbReference type="EC" id="2.7.12.1"/>
    </reaction>
</comment>
<comment type="activity regulation">
    <text evidence="1">TG003 inhibits its kinase activity and affects the regulation of alternative splicing mediated by phosphorylation of SR proteins.</text>
</comment>
<comment type="subunit">
    <text evidence="6 7">Interacts with UBL5.</text>
</comment>
<comment type="interaction">
    <interactant intactId="EBI-633400">
        <id>Q9HAZ1</id>
    </interactant>
    <interactant intactId="EBI-358383">
        <id>P52294</id>
        <label>KPNA1</label>
    </interactant>
    <organismsDiffer>false</organismsDiffer>
    <experiments>3</experiments>
</comment>
<comment type="interaction">
    <interactant intactId="EBI-633400">
        <id>Q9HAZ1</id>
    </interactant>
    <interactant intactId="EBI-12012928">
        <id>P60371</id>
        <label>KRTAP10-6</label>
    </interactant>
    <organismsDiffer>false</organismsDiffer>
    <experiments>3</experiments>
</comment>
<comment type="interaction">
    <interactant intactId="EBI-633400">
        <id>Q9HAZ1</id>
    </interactant>
    <interactant intactId="EBI-10172290">
        <id>P60409</id>
        <label>KRTAP10-7</label>
    </interactant>
    <organismsDiffer>false</organismsDiffer>
    <experiments>6</experiments>
</comment>
<comment type="interaction">
    <interactant intactId="EBI-633400">
        <id>Q9HAZ1</id>
    </interactant>
    <interactant intactId="EBI-10171774">
        <id>P60410</id>
        <label>KRTAP10-8</label>
    </interactant>
    <organismsDiffer>false</organismsDiffer>
    <experiments>3</experiments>
</comment>
<comment type="interaction">
    <interactant intactId="EBI-633400">
        <id>Q9HAZ1</id>
    </interactant>
    <interactant intactId="EBI-10172052">
        <id>P60411</id>
        <label>KRTAP10-9</label>
    </interactant>
    <organismsDiffer>false</organismsDiffer>
    <experiments>3</experiments>
</comment>
<comment type="interaction">
    <interactant intactId="EBI-633400">
        <id>Q9HAZ1</id>
    </interactant>
    <interactant intactId="EBI-3867173">
        <id>A7MD48</id>
        <label>SRRM4</label>
    </interactant>
    <organismsDiffer>false</organismsDiffer>
    <experiments>3</experiments>
</comment>
<comment type="subcellular location">
    <subcellularLocation>
        <location evidence="1">Nucleus</location>
    </subcellularLocation>
</comment>
<comment type="tissue specificity">
    <text evidence="5 9">Expressed in liver, kidney, heart, muscle, brain and endothelial cells.</text>
</comment>
<comment type="PTM">
    <text>Autophosphorylates on all three types of residues.</text>
</comment>
<comment type="similarity">
    <text evidence="10">Belongs to the protein kinase superfamily. CMGC Ser/Thr protein kinase family. Lammer subfamily.</text>
</comment>
<sequence>MRHSKRTHCPDWDSRESWGHESYRGSHKRKRRSHSSTQENRHCKPHHQFKESDCHYLEARSLNERDYRDRRYVDEYRNDYCEGYVPRHYHRDIESGYRIHCSKSSVRSRRSSPKRKRNRHCSSHQSRSKSHRRKRSRSIEDDEEGHLICQSGDVLRARYEIVDTLGEGAFGKVVECIDHGMDGMHVAVKIVKNVGRYREAARSEIQVLEHLNSTDPNSVFRCVQMLEWFDHHGHVCIVFELLGLSTYDFIKENSFLPFQIDHIRQMAYQICQSINFLHHNKLTHTDLKPENILFVKSDYVVKYNSKMKRDERTLKNTDIKVVDFGSATYDDEHHSTLVSTRHYRAPEVILALGWSQPCDVWSIGCILIEYYLGFTVFQTHDSKEHLAMMERILGPIPQHMIQKTRKRKYFHHNQLDWDEHSSAGRYVRRRCKPLKEFMLCHDEEHEKLFDLVRRMLEYDPTQRITLDEALQHPFFDLLKKK</sequence>